<organism>
    <name type="scientific">Caldivirga maquilingensis (strain ATCC 700844 / DSM 13496 / JCM 10307 / IC-167)</name>
    <dbReference type="NCBI Taxonomy" id="397948"/>
    <lineage>
        <taxon>Archaea</taxon>
        <taxon>Thermoproteota</taxon>
        <taxon>Thermoprotei</taxon>
        <taxon>Thermoproteales</taxon>
        <taxon>Thermoproteaceae</taxon>
        <taxon>Caldivirga</taxon>
    </lineage>
</organism>
<comment type="function">
    <text evidence="1">NAD-dependent protein deacetylase which modulates the activities of several enzymes which are inactive in their acetylated form. Deacetylates the N-terminal lysine residue of Alba, the major archaeal chromatin protein and that, in turn, increases Alba's DNA binding affinity, thereby repressing transcription.</text>
</comment>
<comment type="catalytic activity">
    <reaction evidence="1">
        <text>N(6)-acetyl-L-lysyl-[protein] + NAD(+) + H2O = 2''-O-acetyl-ADP-D-ribose + nicotinamide + L-lysyl-[protein]</text>
        <dbReference type="Rhea" id="RHEA:43636"/>
        <dbReference type="Rhea" id="RHEA-COMP:9752"/>
        <dbReference type="Rhea" id="RHEA-COMP:10731"/>
        <dbReference type="ChEBI" id="CHEBI:15377"/>
        <dbReference type="ChEBI" id="CHEBI:17154"/>
        <dbReference type="ChEBI" id="CHEBI:29969"/>
        <dbReference type="ChEBI" id="CHEBI:57540"/>
        <dbReference type="ChEBI" id="CHEBI:61930"/>
        <dbReference type="ChEBI" id="CHEBI:83767"/>
        <dbReference type="EC" id="2.3.1.286"/>
    </reaction>
</comment>
<comment type="cofactor">
    <cofactor evidence="1">
        <name>Zn(2+)</name>
        <dbReference type="ChEBI" id="CHEBI:29105"/>
    </cofactor>
    <text evidence="1">Binds 1 zinc ion per subunit.</text>
</comment>
<comment type="subcellular location">
    <subcellularLocation>
        <location evidence="1">Cytoplasm</location>
    </subcellularLocation>
</comment>
<comment type="similarity">
    <text evidence="1">Belongs to the sirtuin family. Class U subfamily.</text>
</comment>
<keyword id="KW-0963">Cytoplasm</keyword>
<keyword id="KW-0479">Metal-binding</keyword>
<keyword id="KW-0520">NAD</keyword>
<keyword id="KW-1185">Reference proteome</keyword>
<keyword id="KW-0804">Transcription</keyword>
<keyword id="KW-0805">Transcription regulation</keyword>
<keyword id="KW-0808">Transferase</keyword>
<keyword id="KW-0862">Zinc</keyword>
<protein>
    <recommendedName>
        <fullName evidence="1">NAD-dependent protein deacetylase</fullName>
        <ecNumber evidence="1 2">2.3.1.286</ecNumber>
    </recommendedName>
    <alternativeName>
        <fullName evidence="1">Regulatory protein SIR2 homolog</fullName>
    </alternativeName>
</protein>
<feature type="chain" id="PRO_1000084997" description="NAD-dependent protein deacetylase">
    <location>
        <begin position="1"/>
        <end position="257"/>
    </location>
</feature>
<feature type="domain" description="Deacetylase sirtuin-type" evidence="2">
    <location>
        <begin position="3"/>
        <end position="252"/>
    </location>
</feature>
<feature type="active site" description="Proton acceptor" evidence="2">
    <location>
        <position position="123"/>
    </location>
</feature>
<feature type="binding site" evidence="1">
    <location>
        <position position="29"/>
    </location>
    <ligand>
        <name>NAD(+)</name>
        <dbReference type="ChEBI" id="CHEBI:57540"/>
    </ligand>
</feature>
<feature type="binding site" evidence="1">
    <location>
        <position position="33"/>
    </location>
    <ligand>
        <name>NAD(+)</name>
        <dbReference type="ChEBI" id="CHEBI:57540"/>
    </ligand>
</feature>
<feature type="binding site" evidence="1">
    <location>
        <position position="40"/>
    </location>
    <ligand>
        <name>NAD(+)</name>
        <dbReference type="ChEBI" id="CHEBI:57540"/>
    </ligand>
</feature>
<feature type="binding site" evidence="1">
    <location>
        <position position="40"/>
    </location>
    <ligand>
        <name>nicotinamide</name>
        <dbReference type="ChEBI" id="CHEBI:17154"/>
    </ligand>
</feature>
<feature type="binding site" evidence="1">
    <location>
        <position position="41"/>
    </location>
    <ligand>
        <name>NAD(+)</name>
        <dbReference type="ChEBI" id="CHEBI:57540"/>
    </ligand>
</feature>
<feature type="binding site" evidence="1">
    <location>
        <position position="105"/>
    </location>
    <ligand>
        <name>NAD(+)</name>
        <dbReference type="ChEBI" id="CHEBI:57540"/>
    </ligand>
</feature>
<feature type="binding site" evidence="1">
    <location>
        <position position="107"/>
    </location>
    <ligand>
        <name>NAD(+)</name>
        <dbReference type="ChEBI" id="CHEBI:57540"/>
    </ligand>
</feature>
<feature type="binding site" evidence="1">
    <location>
        <position position="107"/>
    </location>
    <ligand>
        <name>nicotinamide</name>
        <dbReference type="ChEBI" id="CHEBI:17154"/>
    </ligand>
</feature>
<feature type="binding site" evidence="1">
    <location>
        <position position="108"/>
    </location>
    <ligand>
        <name>NAD(+)</name>
        <dbReference type="ChEBI" id="CHEBI:57540"/>
    </ligand>
</feature>
<feature type="binding site" evidence="1">
    <location>
        <position position="108"/>
    </location>
    <ligand>
        <name>nicotinamide</name>
        <dbReference type="ChEBI" id="CHEBI:17154"/>
    </ligand>
</feature>
<feature type="binding site" evidence="1">
    <location>
        <position position="123"/>
    </location>
    <ligand>
        <name>NAD(+)</name>
        <dbReference type="ChEBI" id="CHEBI:57540"/>
    </ligand>
</feature>
<feature type="binding site" evidence="1">
    <location>
        <position position="131"/>
    </location>
    <ligand>
        <name>Zn(2+)</name>
        <dbReference type="ChEBI" id="CHEBI:29105"/>
    </ligand>
</feature>
<feature type="binding site" evidence="1">
    <location>
        <position position="134"/>
    </location>
    <ligand>
        <name>Zn(2+)</name>
        <dbReference type="ChEBI" id="CHEBI:29105"/>
    </ligand>
</feature>
<feature type="binding site" evidence="1">
    <location>
        <position position="156"/>
    </location>
    <ligand>
        <name>Zn(2+)</name>
        <dbReference type="ChEBI" id="CHEBI:29105"/>
    </ligand>
</feature>
<feature type="binding site" evidence="1">
    <location>
        <position position="159"/>
    </location>
    <ligand>
        <name>Zn(2+)</name>
        <dbReference type="ChEBI" id="CHEBI:29105"/>
    </ligand>
</feature>
<feature type="binding site" evidence="1">
    <location>
        <position position="195"/>
    </location>
    <ligand>
        <name>NAD(+)</name>
        <dbReference type="ChEBI" id="CHEBI:57540"/>
    </ligand>
</feature>
<feature type="binding site" evidence="1">
    <location>
        <position position="196"/>
    </location>
    <ligand>
        <name>NAD(+)</name>
        <dbReference type="ChEBI" id="CHEBI:57540"/>
    </ligand>
</feature>
<feature type="binding site" evidence="1">
    <location>
        <position position="220"/>
    </location>
    <ligand>
        <name>NAD(+)</name>
        <dbReference type="ChEBI" id="CHEBI:57540"/>
    </ligand>
</feature>
<reference key="1">
    <citation type="submission" date="2007-10" db="EMBL/GenBank/DDBJ databases">
        <title>Complete sequence of Caldivirga maquilingensis IC-167.</title>
        <authorList>
            <consortium name="US DOE Joint Genome Institute"/>
            <person name="Copeland A."/>
            <person name="Lucas S."/>
            <person name="Lapidus A."/>
            <person name="Barry K."/>
            <person name="Glavina del Rio T."/>
            <person name="Dalin E."/>
            <person name="Tice H."/>
            <person name="Pitluck S."/>
            <person name="Saunders E."/>
            <person name="Brettin T."/>
            <person name="Bruce D."/>
            <person name="Detter J.C."/>
            <person name="Han C."/>
            <person name="Schmutz J."/>
            <person name="Larimer F."/>
            <person name="Land M."/>
            <person name="Hauser L."/>
            <person name="Kyrpides N."/>
            <person name="Ivanova N."/>
            <person name="Biddle J.F."/>
            <person name="Zhang Z."/>
            <person name="Fitz-Gibbon S.T."/>
            <person name="Lowe T.M."/>
            <person name="Saltikov C."/>
            <person name="House C.H."/>
            <person name="Richardson P."/>
        </authorList>
    </citation>
    <scope>NUCLEOTIDE SEQUENCE [LARGE SCALE GENOMIC DNA]</scope>
    <source>
        <strain>ATCC 700844 / DSM 13496 / JCM 10307 / IC-167</strain>
    </source>
</reference>
<gene>
    <name evidence="1" type="primary">cobB</name>
    <name type="ordered locus">Cmaq_0442</name>
</gene>
<accession>A8MBU4</accession>
<name>NPD_CALMQ</name>
<proteinExistence type="inferred from homology"/>
<dbReference type="EC" id="2.3.1.286" evidence="1 2"/>
<dbReference type="EMBL" id="CP000852">
    <property type="protein sequence ID" value="ABW01287.1"/>
    <property type="molecule type" value="Genomic_DNA"/>
</dbReference>
<dbReference type="RefSeq" id="WP_012185507.1">
    <property type="nucleotide sequence ID" value="NC_009954.1"/>
</dbReference>
<dbReference type="SMR" id="A8MBU4"/>
<dbReference type="STRING" id="397948.Cmaq_0442"/>
<dbReference type="GeneID" id="5709925"/>
<dbReference type="KEGG" id="cma:Cmaq_0442"/>
<dbReference type="eggNOG" id="arCOG04248">
    <property type="taxonomic scope" value="Archaea"/>
</dbReference>
<dbReference type="HOGENOM" id="CLU_023643_3_1_2"/>
<dbReference type="OrthoDB" id="728at2157"/>
<dbReference type="Proteomes" id="UP000001137">
    <property type="component" value="Chromosome"/>
</dbReference>
<dbReference type="GO" id="GO:0005737">
    <property type="term" value="C:cytoplasm"/>
    <property type="evidence" value="ECO:0007669"/>
    <property type="project" value="UniProtKB-SubCell"/>
</dbReference>
<dbReference type="GO" id="GO:0017136">
    <property type="term" value="F:histone deacetylase activity, NAD-dependent"/>
    <property type="evidence" value="ECO:0007669"/>
    <property type="project" value="TreeGrafter"/>
</dbReference>
<dbReference type="GO" id="GO:0070403">
    <property type="term" value="F:NAD+ binding"/>
    <property type="evidence" value="ECO:0007669"/>
    <property type="project" value="UniProtKB-UniRule"/>
</dbReference>
<dbReference type="GO" id="GO:0008270">
    <property type="term" value="F:zinc ion binding"/>
    <property type="evidence" value="ECO:0007669"/>
    <property type="project" value="UniProtKB-UniRule"/>
</dbReference>
<dbReference type="Gene3D" id="3.30.1600.10">
    <property type="entry name" value="SIR2/SIRT2 'Small Domain"/>
    <property type="match status" value="1"/>
</dbReference>
<dbReference type="Gene3D" id="3.40.50.1220">
    <property type="entry name" value="TPP-binding domain"/>
    <property type="match status" value="1"/>
</dbReference>
<dbReference type="HAMAP" id="MF_01968">
    <property type="entry name" value="Sirtuin_ClassU"/>
    <property type="match status" value="1"/>
</dbReference>
<dbReference type="InterPro" id="IPR029035">
    <property type="entry name" value="DHS-like_NAD/FAD-binding_dom"/>
</dbReference>
<dbReference type="InterPro" id="IPR050134">
    <property type="entry name" value="NAD-dep_sirtuin_deacylases"/>
</dbReference>
<dbReference type="InterPro" id="IPR003000">
    <property type="entry name" value="Sirtuin"/>
</dbReference>
<dbReference type="InterPro" id="IPR026591">
    <property type="entry name" value="Sirtuin_cat_small_dom_sf"/>
</dbReference>
<dbReference type="InterPro" id="IPR028628">
    <property type="entry name" value="Sirtuin_class_U"/>
</dbReference>
<dbReference type="InterPro" id="IPR026590">
    <property type="entry name" value="Ssirtuin_cat_dom"/>
</dbReference>
<dbReference type="NCBIfam" id="NF001753">
    <property type="entry name" value="PRK00481.1-3"/>
    <property type="match status" value="1"/>
</dbReference>
<dbReference type="NCBIfam" id="NF040867">
    <property type="entry name" value="prot_deacyl_CobB"/>
    <property type="match status" value="1"/>
</dbReference>
<dbReference type="PANTHER" id="PTHR11085:SF11">
    <property type="entry name" value="NAD-DEPENDENT PROTEIN DEACETYLASE"/>
    <property type="match status" value="1"/>
</dbReference>
<dbReference type="PANTHER" id="PTHR11085">
    <property type="entry name" value="NAD-DEPENDENT PROTEIN DEACYLASE SIRTUIN-5, MITOCHONDRIAL-RELATED"/>
    <property type="match status" value="1"/>
</dbReference>
<dbReference type="Pfam" id="PF02146">
    <property type="entry name" value="SIR2"/>
    <property type="match status" value="1"/>
</dbReference>
<dbReference type="SUPFAM" id="SSF52467">
    <property type="entry name" value="DHS-like NAD/FAD-binding domain"/>
    <property type="match status" value="1"/>
</dbReference>
<dbReference type="PROSITE" id="PS50305">
    <property type="entry name" value="SIRTUIN"/>
    <property type="match status" value="1"/>
</dbReference>
<evidence type="ECO:0000255" key="1">
    <source>
        <dbReference type="HAMAP-Rule" id="MF_01968"/>
    </source>
</evidence>
<evidence type="ECO:0000255" key="2">
    <source>
        <dbReference type="PROSITE-ProRule" id="PRU00236"/>
    </source>
</evidence>
<sequence length="257" mass="28161">MGNGECLEGGRKAAVILTSSRHAIAFTGAGISTESGIPDFRGPQGLWRRFDPALASIDYLNTDPKGFWEFYIERFRVLNNARPNKAHLALAELEKLGIIKYVITQNIDNLHQSAGSINVIELHGNYTTVYCMRCKTQYPFTLALRKYEEGENPPRCPKCGGILRPNVVLFGEPVNEINRALEIAALSDVALVVGSSLTVYPAAYVPLVVKEHGGRLIIINLEPTDYDDYADVVLHCSASEALDLVLNEVKGIMAAGN</sequence>